<evidence type="ECO:0000255" key="1">
    <source>
        <dbReference type="HAMAP-Rule" id="MF_00180"/>
    </source>
</evidence>
<reference key="1">
    <citation type="journal article" date="2003" name="Proc. Natl. Acad. Sci. U.S.A.">
        <title>Reductive genome evolution in Buchnera aphidicola.</title>
        <authorList>
            <person name="van Ham R.C.H.J."/>
            <person name="Kamerbeek J."/>
            <person name="Palacios C."/>
            <person name="Rausell C."/>
            <person name="Abascal F."/>
            <person name="Bastolla U."/>
            <person name="Fernandez J.M."/>
            <person name="Jimenez L."/>
            <person name="Postigo M."/>
            <person name="Silva F.J."/>
            <person name="Tamames J."/>
            <person name="Viguera E."/>
            <person name="Latorre A."/>
            <person name="Valencia A."/>
            <person name="Moran F."/>
            <person name="Moya A."/>
        </authorList>
    </citation>
    <scope>NUCLEOTIDE SEQUENCE [LARGE SCALE GENOMIC DNA]</scope>
    <source>
        <strain>Bp</strain>
    </source>
</reference>
<sequence length="211" mass="23239">MTQNLLDQFGTPKTRVKNAISALRYGHGIIVLDNEDRENEGDLIFSGETMTTEQMALTIRYGSGIVCLCITESKRKQLKLPMMVQNNTSKFGTNFTVTIEAAEGISTGVSAKDRLTTIRAAINDNAKPSDLNRPGHIFPLQAHKNGILGRIGHTEAAIEFVTLAGFKPAGIICELTNRNGTMSKVPDIIKFSKLKKMTIVTIRDLIQYISR</sequence>
<accession>P59556</accession>
<proteinExistence type="inferred from homology"/>
<protein>
    <recommendedName>
        <fullName evidence="1">3,4-dihydroxy-2-butanone 4-phosphate synthase</fullName>
        <shortName evidence="1">DHBP synthase</shortName>
        <ecNumber evidence="1">4.1.99.12</ecNumber>
    </recommendedName>
</protein>
<comment type="function">
    <text evidence="1">Catalyzes the conversion of D-ribulose 5-phosphate to formate and 3,4-dihydroxy-2-butanone 4-phosphate.</text>
</comment>
<comment type="catalytic activity">
    <reaction evidence="1">
        <text>D-ribulose 5-phosphate = (2S)-2-hydroxy-3-oxobutyl phosphate + formate + H(+)</text>
        <dbReference type="Rhea" id="RHEA:18457"/>
        <dbReference type="ChEBI" id="CHEBI:15378"/>
        <dbReference type="ChEBI" id="CHEBI:15740"/>
        <dbReference type="ChEBI" id="CHEBI:58121"/>
        <dbReference type="ChEBI" id="CHEBI:58830"/>
        <dbReference type="EC" id="4.1.99.12"/>
    </reaction>
</comment>
<comment type="cofactor">
    <cofactor evidence="1">
        <name>Mg(2+)</name>
        <dbReference type="ChEBI" id="CHEBI:18420"/>
    </cofactor>
    <cofactor evidence="1">
        <name>Mn(2+)</name>
        <dbReference type="ChEBI" id="CHEBI:29035"/>
    </cofactor>
    <text evidence="1">Binds 2 divalent metal cations per subunit. Magnesium or manganese.</text>
</comment>
<comment type="pathway">
    <text evidence="1">Cofactor biosynthesis; riboflavin biosynthesis; 2-hydroxy-3-oxobutyl phosphate from D-ribulose 5-phosphate: step 1/1.</text>
</comment>
<comment type="subunit">
    <text evidence="1">Homodimer.</text>
</comment>
<comment type="similarity">
    <text evidence="1">Belongs to the DHBP synthase family.</text>
</comment>
<dbReference type="EC" id="4.1.99.12" evidence="1"/>
<dbReference type="EMBL" id="AE016826">
    <property type="protein sequence ID" value="AAO26795.1"/>
    <property type="molecule type" value="Genomic_DNA"/>
</dbReference>
<dbReference type="RefSeq" id="WP_011091196.1">
    <property type="nucleotide sequence ID" value="NC_004545.1"/>
</dbReference>
<dbReference type="SMR" id="P59556"/>
<dbReference type="STRING" id="224915.bbp_056"/>
<dbReference type="KEGG" id="bab:bbp_056"/>
<dbReference type="eggNOG" id="COG0108">
    <property type="taxonomic scope" value="Bacteria"/>
</dbReference>
<dbReference type="HOGENOM" id="CLU_020273_3_0_6"/>
<dbReference type="OrthoDB" id="9793111at2"/>
<dbReference type="UniPathway" id="UPA00275">
    <property type="reaction ID" value="UER00399"/>
</dbReference>
<dbReference type="Proteomes" id="UP000000601">
    <property type="component" value="Chromosome"/>
</dbReference>
<dbReference type="GO" id="GO:0005829">
    <property type="term" value="C:cytosol"/>
    <property type="evidence" value="ECO:0007669"/>
    <property type="project" value="TreeGrafter"/>
</dbReference>
<dbReference type="GO" id="GO:0008686">
    <property type="term" value="F:3,4-dihydroxy-2-butanone-4-phosphate synthase activity"/>
    <property type="evidence" value="ECO:0007669"/>
    <property type="project" value="UniProtKB-UniRule"/>
</dbReference>
<dbReference type="GO" id="GO:0000287">
    <property type="term" value="F:magnesium ion binding"/>
    <property type="evidence" value="ECO:0007669"/>
    <property type="project" value="UniProtKB-UniRule"/>
</dbReference>
<dbReference type="GO" id="GO:0030145">
    <property type="term" value="F:manganese ion binding"/>
    <property type="evidence" value="ECO:0007669"/>
    <property type="project" value="UniProtKB-UniRule"/>
</dbReference>
<dbReference type="GO" id="GO:0009231">
    <property type="term" value="P:riboflavin biosynthetic process"/>
    <property type="evidence" value="ECO:0007669"/>
    <property type="project" value="UniProtKB-UniRule"/>
</dbReference>
<dbReference type="FunFam" id="3.90.870.10:FF:000002">
    <property type="entry name" value="3,4-dihydroxy-2-butanone 4-phosphate synthase"/>
    <property type="match status" value="1"/>
</dbReference>
<dbReference type="Gene3D" id="3.90.870.10">
    <property type="entry name" value="DHBP synthase"/>
    <property type="match status" value="1"/>
</dbReference>
<dbReference type="HAMAP" id="MF_00180">
    <property type="entry name" value="RibB"/>
    <property type="match status" value="1"/>
</dbReference>
<dbReference type="InterPro" id="IPR017945">
    <property type="entry name" value="DHBP_synth_RibB-like_a/b_dom"/>
</dbReference>
<dbReference type="InterPro" id="IPR000422">
    <property type="entry name" value="DHBP_synthase_RibB"/>
</dbReference>
<dbReference type="NCBIfam" id="TIGR00506">
    <property type="entry name" value="ribB"/>
    <property type="match status" value="1"/>
</dbReference>
<dbReference type="PANTHER" id="PTHR21327:SF38">
    <property type="entry name" value="3,4-DIHYDROXY-2-BUTANONE 4-PHOSPHATE SYNTHASE"/>
    <property type="match status" value="1"/>
</dbReference>
<dbReference type="PANTHER" id="PTHR21327">
    <property type="entry name" value="GTP CYCLOHYDROLASE II-RELATED"/>
    <property type="match status" value="1"/>
</dbReference>
<dbReference type="Pfam" id="PF00926">
    <property type="entry name" value="DHBP_synthase"/>
    <property type="match status" value="1"/>
</dbReference>
<dbReference type="SUPFAM" id="SSF55821">
    <property type="entry name" value="YrdC/RibB"/>
    <property type="match status" value="1"/>
</dbReference>
<keyword id="KW-0456">Lyase</keyword>
<keyword id="KW-0460">Magnesium</keyword>
<keyword id="KW-0464">Manganese</keyword>
<keyword id="KW-0479">Metal-binding</keyword>
<keyword id="KW-1185">Reference proteome</keyword>
<keyword id="KW-0686">Riboflavin biosynthesis</keyword>
<feature type="chain" id="PRO_0000151793" description="3,4-dihydroxy-2-butanone 4-phosphate synthase">
    <location>
        <begin position="1"/>
        <end position="211"/>
    </location>
</feature>
<feature type="binding site" evidence="1">
    <location>
        <begin position="37"/>
        <end position="38"/>
    </location>
    <ligand>
        <name>D-ribulose 5-phosphate</name>
        <dbReference type="ChEBI" id="CHEBI:58121"/>
    </ligand>
</feature>
<feature type="binding site" evidence="1">
    <location>
        <position position="38"/>
    </location>
    <ligand>
        <name>Mg(2+)</name>
        <dbReference type="ChEBI" id="CHEBI:18420"/>
        <label>1</label>
    </ligand>
</feature>
<feature type="binding site" evidence="1">
    <location>
        <position position="38"/>
    </location>
    <ligand>
        <name>Mg(2+)</name>
        <dbReference type="ChEBI" id="CHEBI:18420"/>
        <label>2</label>
    </ligand>
</feature>
<feature type="binding site" evidence="1">
    <location>
        <position position="42"/>
    </location>
    <ligand>
        <name>D-ribulose 5-phosphate</name>
        <dbReference type="ChEBI" id="CHEBI:58121"/>
    </ligand>
</feature>
<feature type="binding site" evidence="1">
    <location>
        <begin position="150"/>
        <end position="154"/>
    </location>
    <ligand>
        <name>D-ribulose 5-phosphate</name>
        <dbReference type="ChEBI" id="CHEBI:58121"/>
    </ligand>
</feature>
<feature type="binding site" evidence="1">
    <location>
        <position position="153"/>
    </location>
    <ligand>
        <name>Mg(2+)</name>
        <dbReference type="ChEBI" id="CHEBI:18420"/>
        <label>2</label>
    </ligand>
</feature>
<feature type="binding site" evidence="1">
    <location>
        <position position="174"/>
    </location>
    <ligand>
        <name>D-ribulose 5-phosphate</name>
        <dbReference type="ChEBI" id="CHEBI:58121"/>
    </ligand>
</feature>
<feature type="site" description="Essential for catalytic activity" evidence="1">
    <location>
        <position position="136"/>
    </location>
</feature>
<feature type="site" description="Essential for catalytic activity" evidence="1">
    <location>
        <position position="174"/>
    </location>
</feature>
<organism>
    <name type="scientific">Buchnera aphidicola subsp. Baizongia pistaciae (strain Bp)</name>
    <dbReference type="NCBI Taxonomy" id="224915"/>
    <lineage>
        <taxon>Bacteria</taxon>
        <taxon>Pseudomonadati</taxon>
        <taxon>Pseudomonadota</taxon>
        <taxon>Gammaproteobacteria</taxon>
        <taxon>Enterobacterales</taxon>
        <taxon>Erwiniaceae</taxon>
        <taxon>Buchnera</taxon>
    </lineage>
</organism>
<gene>
    <name evidence="1" type="primary">ribB</name>
    <name type="ordered locus">bbp_056</name>
</gene>
<name>RIBB_BUCBP</name>